<protein>
    <recommendedName>
        <fullName evidence="1">dCTP deaminase</fullName>
        <ecNumber evidence="1">3.5.4.13</ecNumber>
    </recommendedName>
    <alternativeName>
        <fullName evidence="1">Deoxycytidine triphosphate deaminase</fullName>
    </alternativeName>
</protein>
<accession>B8F4U0</accession>
<keyword id="KW-0378">Hydrolase</keyword>
<keyword id="KW-0546">Nucleotide metabolism</keyword>
<keyword id="KW-0547">Nucleotide-binding</keyword>
<keyword id="KW-1185">Reference proteome</keyword>
<reference key="1">
    <citation type="journal article" date="2009" name="J. Bacteriol.">
        <title>Complete genome sequence of Haemophilus parasuis SH0165.</title>
        <authorList>
            <person name="Yue M."/>
            <person name="Yang F."/>
            <person name="Yang J."/>
            <person name="Bei W."/>
            <person name="Cai X."/>
            <person name="Chen L."/>
            <person name="Dong J."/>
            <person name="Zhou R."/>
            <person name="Jin M."/>
            <person name="Jin Q."/>
            <person name="Chen H."/>
        </authorList>
    </citation>
    <scope>NUCLEOTIDE SEQUENCE [LARGE SCALE GENOMIC DNA]</scope>
    <source>
        <strain>SH0165</strain>
    </source>
</reference>
<proteinExistence type="inferred from homology"/>
<comment type="function">
    <text evidence="1">Catalyzes the deamination of dCTP to dUTP.</text>
</comment>
<comment type="catalytic activity">
    <reaction evidence="1">
        <text>dCTP + H2O + H(+) = dUTP + NH4(+)</text>
        <dbReference type="Rhea" id="RHEA:22680"/>
        <dbReference type="ChEBI" id="CHEBI:15377"/>
        <dbReference type="ChEBI" id="CHEBI:15378"/>
        <dbReference type="ChEBI" id="CHEBI:28938"/>
        <dbReference type="ChEBI" id="CHEBI:61481"/>
        <dbReference type="ChEBI" id="CHEBI:61555"/>
        <dbReference type="EC" id="3.5.4.13"/>
    </reaction>
</comment>
<comment type="pathway">
    <text evidence="1">Pyrimidine metabolism; dUMP biosynthesis; dUMP from dCTP (dUTP route): step 1/2.</text>
</comment>
<comment type="subunit">
    <text evidence="1">Homotrimer.</text>
</comment>
<comment type="similarity">
    <text evidence="1">Belongs to the dCTP deaminase family.</text>
</comment>
<gene>
    <name evidence="1" type="primary">dcd</name>
    <name type="ordered locus">HAPS_0696</name>
</gene>
<name>DCD_GLAP5</name>
<sequence length="194" mass="21713">MRLCDKDIERYLDEGIISLTPRPSNEKISGATIDVRLGNSFRVFREHSTPYIDLSGPREEMTAQLNRVMSDEILIADDEAFFLHPGELALATTLESVKLPANIVGWLDGRSSLARLGLMVHVTAHRIDPGWEGKIVLEFFNAGKLPLALRPNMAIGALSFEILSGYAEHPYNARKDAKYKNQQSAVFSRIDKDE</sequence>
<evidence type="ECO:0000255" key="1">
    <source>
        <dbReference type="HAMAP-Rule" id="MF_00146"/>
    </source>
</evidence>
<dbReference type="EC" id="3.5.4.13" evidence="1"/>
<dbReference type="EMBL" id="CP001321">
    <property type="protein sequence ID" value="ACL32342.1"/>
    <property type="molecule type" value="Genomic_DNA"/>
</dbReference>
<dbReference type="RefSeq" id="WP_005710639.1">
    <property type="nucleotide sequence ID" value="NC_011852.1"/>
</dbReference>
<dbReference type="SMR" id="B8F4U0"/>
<dbReference type="STRING" id="557723.HAPS_0696"/>
<dbReference type="GeneID" id="66619302"/>
<dbReference type="KEGG" id="hap:HAPS_0696"/>
<dbReference type="HOGENOM" id="CLU_087476_2_0_6"/>
<dbReference type="UniPathway" id="UPA00610">
    <property type="reaction ID" value="UER00665"/>
</dbReference>
<dbReference type="Proteomes" id="UP000006743">
    <property type="component" value="Chromosome"/>
</dbReference>
<dbReference type="GO" id="GO:0008829">
    <property type="term" value="F:dCTP deaminase activity"/>
    <property type="evidence" value="ECO:0007669"/>
    <property type="project" value="UniProtKB-UniRule"/>
</dbReference>
<dbReference type="GO" id="GO:0000166">
    <property type="term" value="F:nucleotide binding"/>
    <property type="evidence" value="ECO:0007669"/>
    <property type="project" value="UniProtKB-KW"/>
</dbReference>
<dbReference type="GO" id="GO:0006226">
    <property type="term" value="P:dUMP biosynthetic process"/>
    <property type="evidence" value="ECO:0007669"/>
    <property type="project" value="UniProtKB-UniPathway"/>
</dbReference>
<dbReference type="GO" id="GO:0006229">
    <property type="term" value="P:dUTP biosynthetic process"/>
    <property type="evidence" value="ECO:0007669"/>
    <property type="project" value="UniProtKB-UniRule"/>
</dbReference>
<dbReference type="GO" id="GO:0015949">
    <property type="term" value="P:nucleobase-containing small molecule interconversion"/>
    <property type="evidence" value="ECO:0007669"/>
    <property type="project" value="TreeGrafter"/>
</dbReference>
<dbReference type="CDD" id="cd07557">
    <property type="entry name" value="trimeric_dUTPase"/>
    <property type="match status" value="1"/>
</dbReference>
<dbReference type="FunFam" id="2.70.40.10:FF:000003">
    <property type="entry name" value="dCTP deaminase"/>
    <property type="match status" value="1"/>
</dbReference>
<dbReference type="Gene3D" id="2.70.40.10">
    <property type="match status" value="1"/>
</dbReference>
<dbReference type="HAMAP" id="MF_00146">
    <property type="entry name" value="dCTP_deaminase"/>
    <property type="match status" value="1"/>
</dbReference>
<dbReference type="InterPro" id="IPR011962">
    <property type="entry name" value="dCTP_deaminase"/>
</dbReference>
<dbReference type="InterPro" id="IPR036157">
    <property type="entry name" value="dUTPase-like_sf"/>
</dbReference>
<dbReference type="InterPro" id="IPR033704">
    <property type="entry name" value="dUTPase_trimeric"/>
</dbReference>
<dbReference type="NCBIfam" id="TIGR02274">
    <property type="entry name" value="dCTP_deam"/>
    <property type="match status" value="1"/>
</dbReference>
<dbReference type="PANTHER" id="PTHR42680">
    <property type="entry name" value="DCTP DEAMINASE"/>
    <property type="match status" value="1"/>
</dbReference>
<dbReference type="PANTHER" id="PTHR42680:SF3">
    <property type="entry name" value="DCTP DEAMINASE"/>
    <property type="match status" value="1"/>
</dbReference>
<dbReference type="Pfam" id="PF22769">
    <property type="entry name" value="DCD"/>
    <property type="match status" value="1"/>
</dbReference>
<dbReference type="SUPFAM" id="SSF51283">
    <property type="entry name" value="dUTPase-like"/>
    <property type="match status" value="1"/>
</dbReference>
<organism>
    <name type="scientific">Glaesserella parasuis serovar 5 (strain SH0165)</name>
    <name type="common">Haemophilus parasuis</name>
    <dbReference type="NCBI Taxonomy" id="557723"/>
    <lineage>
        <taxon>Bacteria</taxon>
        <taxon>Pseudomonadati</taxon>
        <taxon>Pseudomonadota</taxon>
        <taxon>Gammaproteobacteria</taxon>
        <taxon>Pasteurellales</taxon>
        <taxon>Pasteurellaceae</taxon>
        <taxon>Glaesserella</taxon>
    </lineage>
</organism>
<feature type="chain" id="PRO_1000123147" description="dCTP deaminase">
    <location>
        <begin position="1"/>
        <end position="194"/>
    </location>
</feature>
<feature type="active site" description="Proton donor/acceptor" evidence="1">
    <location>
        <position position="138"/>
    </location>
</feature>
<feature type="binding site" evidence="1">
    <location>
        <begin position="110"/>
        <end position="115"/>
    </location>
    <ligand>
        <name>dCTP</name>
        <dbReference type="ChEBI" id="CHEBI:61481"/>
    </ligand>
</feature>
<feature type="binding site" evidence="1">
    <location>
        <position position="128"/>
    </location>
    <ligand>
        <name>dCTP</name>
        <dbReference type="ChEBI" id="CHEBI:61481"/>
    </ligand>
</feature>
<feature type="binding site" evidence="1">
    <location>
        <begin position="136"/>
        <end position="138"/>
    </location>
    <ligand>
        <name>dCTP</name>
        <dbReference type="ChEBI" id="CHEBI:61481"/>
    </ligand>
</feature>
<feature type="binding site" evidence="1">
    <location>
        <position position="171"/>
    </location>
    <ligand>
        <name>dCTP</name>
        <dbReference type="ChEBI" id="CHEBI:61481"/>
    </ligand>
</feature>
<feature type="binding site" evidence="1">
    <location>
        <position position="178"/>
    </location>
    <ligand>
        <name>dCTP</name>
        <dbReference type="ChEBI" id="CHEBI:61481"/>
    </ligand>
</feature>
<feature type="binding site" evidence="1">
    <location>
        <position position="182"/>
    </location>
    <ligand>
        <name>dCTP</name>
        <dbReference type="ChEBI" id="CHEBI:61481"/>
    </ligand>
</feature>